<keyword id="KW-0413">Isomerase</keyword>
<keyword id="KW-0460">Magnesium</keyword>
<keyword id="KW-0479">Metal-binding</keyword>
<keyword id="KW-0597">Phosphoprotein</keyword>
<keyword id="KW-1185">Reference proteome</keyword>
<reference key="1">
    <citation type="submission" date="2007-11" db="EMBL/GenBank/DDBJ databases">
        <title>Complete genome sequence of Clostridium phytofermentans ISDg.</title>
        <authorList>
            <person name="Leschine S.B."/>
            <person name="Warnick T.A."/>
            <person name="Blanchard J.L."/>
            <person name="Schnell D.J."/>
            <person name="Petit E.L."/>
            <person name="LaTouf W.G."/>
            <person name="Copeland A."/>
            <person name="Lucas S."/>
            <person name="Lapidus A."/>
            <person name="Barry K."/>
            <person name="Glavina del Rio T."/>
            <person name="Dalin E."/>
            <person name="Tice H."/>
            <person name="Pitluck S."/>
            <person name="Kiss H."/>
            <person name="Brettin T."/>
            <person name="Bruce D."/>
            <person name="Detter J.C."/>
            <person name="Han C."/>
            <person name="Kuske C."/>
            <person name="Schmutz J."/>
            <person name="Larimer F."/>
            <person name="Land M."/>
            <person name="Hauser L."/>
            <person name="Kyrpides N."/>
            <person name="Kim E.A."/>
            <person name="Richardson P."/>
        </authorList>
    </citation>
    <scope>NUCLEOTIDE SEQUENCE [LARGE SCALE GENOMIC DNA]</scope>
    <source>
        <strain>ATCC 700394 / DSM 18823 / ISDg</strain>
    </source>
</reference>
<accession>A9KSW8</accession>
<comment type="function">
    <text evidence="1">Catalyzes the conversion of glucosamine-6-phosphate to glucosamine-1-phosphate.</text>
</comment>
<comment type="catalytic activity">
    <reaction evidence="1">
        <text>alpha-D-glucosamine 1-phosphate = D-glucosamine 6-phosphate</text>
        <dbReference type="Rhea" id="RHEA:23424"/>
        <dbReference type="ChEBI" id="CHEBI:58516"/>
        <dbReference type="ChEBI" id="CHEBI:58725"/>
        <dbReference type="EC" id="5.4.2.10"/>
    </reaction>
</comment>
<comment type="cofactor">
    <cofactor evidence="1">
        <name>Mg(2+)</name>
        <dbReference type="ChEBI" id="CHEBI:18420"/>
    </cofactor>
    <text evidence="1">Binds 1 Mg(2+) ion per subunit.</text>
</comment>
<comment type="PTM">
    <text evidence="1">Activated by phosphorylation.</text>
</comment>
<comment type="similarity">
    <text evidence="1">Belongs to the phosphohexose mutase family.</text>
</comment>
<organism>
    <name type="scientific">Lachnoclostridium phytofermentans (strain ATCC 700394 / DSM 18823 / ISDg)</name>
    <name type="common">Clostridium phytofermentans</name>
    <dbReference type="NCBI Taxonomy" id="357809"/>
    <lineage>
        <taxon>Bacteria</taxon>
        <taxon>Bacillati</taxon>
        <taxon>Bacillota</taxon>
        <taxon>Clostridia</taxon>
        <taxon>Lachnospirales</taxon>
        <taxon>Lachnospiraceae</taxon>
    </lineage>
</organism>
<dbReference type="EC" id="5.4.2.10" evidence="1"/>
<dbReference type="EMBL" id="CP000885">
    <property type="protein sequence ID" value="ABX40762.1"/>
    <property type="molecule type" value="Genomic_DNA"/>
</dbReference>
<dbReference type="RefSeq" id="WP_012198405.1">
    <property type="nucleotide sequence ID" value="NC_010001.1"/>
</dbReference>
<dbReference type="SMR" id="A9KSW8"/>
<dbReference type="STRING" id="357809.Cphy_0375"/>
<dbReference type="KEGG" id="cpy:Cphy_0375"/>
<dbReference type="eggNOG" id="COG1109">
    <property type="taxonomic scope" value="Bacteria"/>
</dbReference>
<dbReference type="HOGENOM" id="CLU_016950_7_0_9"/>
<dbReference type="OrthoDB" id="9806956at2"/>
<dbReference type="Proteomes" id="UP000000370">
    <property type="component" value="Chromosome"/>
</dbReference>
<dbReference type="GO" id="GO:0005829">
    <property type="term" value="C:cytosol"/>
    <property type="evidence" value="ECO:0007669"/>
    <property type="project" value="TreeGrafter"/>
</dbReference>
<dbReference type="GO" id="GO:0000287">
    <property type="term" value="F:magnesium ion binding"/>
    <property type="evidence" value="ECO:0007669"/>
    <property type="project" value="UniProtKB-UniRule"/>
</dbReference>
<dbReference type="GO" id="GO:0008966">
    <property type="term" value="F:phosphoglucosamine mutase activity"/>
    <property type="evidence" value="ECO:0007669"/>
    <property type="project" value="UniProtKB-UniRule"/>
</dbReference>
<dbReference type="GO" id="GO:0004615">
    <property type="term" value="F:phosphomannomutase activity"/>
    <property type="evidence" value="ECO:0007669"/>
    <property type="project" value="TreeGrafter"/>
</dbReference>
<dbReference type="GO" id="GO:0005975">
    <property type="term" value="P:carbohydrate metabolic process"/>
    <property type="evidence" value="ECO:0007669"/>
    <property type="project" value="InterPro"/>
</dbReference>
<dbReference type="GO" id="GO:0009252">
    <property type="term" value="P:peptidoglycan biosynthetic process"/>
    <property type="evidence" value="ECO:0007669"/>
    <property type="project" value="TreeGrafter"/>
</dbReference>
<dbReference type="GO" id="GO:0006048">
    <property type="term" value="P:UDP-N-acetylglucosamine biosynthetic process"/>
    <property type="evidence" value="ECO:0007669"/>
    <property type="project" value="TreeGrafter"/>
</dbReference>
<dbReference type="CDD" id="cd05802">
    <property type="entry name" value="GlmM"/>
    <property type="match status" value="1"/>
</dbReference>
<dbReference type="FunFam" id="3.30.310.50:FF:000001">
    <property type="entry name" value="Phosphoglucosamine mutase"/>
    <property type="match status" value="1"/>
</dbReference>
<dbReference type="FunFam" id="3.40.120.10:FF:000001">
    <property type="entry name" value="Phosphoglucosamine mutase"/>
    <property type="match status" value="1"/>
</dbReference>
<dbReference type="FunFam" id="3.40.120.10:FF:000002">
    <property type="entry name" value="Phosphoglucosamine mutase"/>
    <property type="match status" value="1"/>
</dbReference>
<dbReference type="Gene3D" id="3.40.120.10">
    <property type="entry name" value="Alpha-D-Glucose-1,6-Bisphosphate, subunit A, domain 3"/>
    <property type="match status" value="3"/>
</dbReference>
<dbReference type="Gene3D" id="3.30.310.50">
    <property type="entry name" value="Alpha-D-phosphohexomutase, C-terminal domain"/>
    <property type="match status" value="1"/>
</dbReference>
<dbReference type="HAMAP" id="MF_01554_B">
    <property type="entry name" value="GlmM_B"/>
    <property type="match status" value="1"/>
</dbReference>
<dbReference type="InterPro" id="IPR005844">
    <property type="entry name" value="A-D-PHexomutase_a/b/a-I"/>
</dbReference>
<dbReference type="InterPro" id="IPR016055">
    <property type="entry name" value="A-D-PHexomutase_a/b/a-I/II/III"/>
</dbReference>
<dbReference type="InterPro" id="IPR005845">
    <property type="entry name" value="A-D-PHexomutase_a/b/a-II"/>
</dbReference>
<dbReference type="InterPro" id="IPR005846">
    <property type="entry name" value="A-D-PHexomutase_a/b/a-III"/>
</dbReference>
<dbReference type="InterPro" id="IPR005843">
    <property type="entry name" value="A-D-PHexomutase_C"/>
</dbReference>
<dbReference type="InterPro" id="IPR036900">
    <property type="entry name" value="A-D-PHexomutase_C_sf"/>
</dbReference>
<dbReference type="InterPro" id="IPR016066">
    <property type="entry name" value="A-D-PHexomutase_CS"/>
</dbReference>
<dbReference type="InterPro" id="IPR005841">
    <property type="entry name" value="Alpha-D-phosphohexomutase_SF"/>
</dbReference>
<dbReference type="InterPro" id="IPR006352">
    <property type="entry name" value="GlmM_bact"/>
</dbReference>
<dbReference type="InterPro" id="IPR050060">
    <property type="entry name" value="Phosphoglucosamine_mutase"/>
</dbReference>
<dbReference type="NCBIfam" id="TIGR01455">
    <property type="entry name" value="glmM"/>
    <property type="match status" value="1"/>
</dbReference>
<dbReference type="PANTHER" id="PTHR42946:SF1">
    <property type="entry name" value="PHOSPHOGLUCOMUTASE (ALPHA-D-GLUCOSE-1,6-BISPHOSPHATE-DEPENDENT)"/>
    <property type="match status" value="1"/>
</dbReference>
<dbReference type="PANTHER" id="PTHR42946">
    <property type="entry name" value="PHOSPHOHEXOSE MUTASE"/>
    <property type="match status" value="1"/>
</dbReference>
<dbReference type="Pfam" id="PF02878">
    <property type="entry name" value="PGM_PMM_I"/>
    <property type="match status" value="1"/>
</dbReference>
<dbReference type="Pfam" id="PF02879">
    <property type="entry name" value="PGM_PMM_II"/>
    <property type="match status" value="1"/>
</dbReference>
<dbReference type="Pfam" id="PF02880">
    <property type="entry name" value="PGM_PMM_III"/>
    <property type="match status" value="1"/>
</dbReference>
<dbReference type="Pfam" id="PF00408">
    <property type="entry name" value="PGM_PMM_IV"/>
    <property type="match status" value="1"/>
</dbReference>
<dbReference type="PRINTS" id="PR00509">
    <property type="entry name" value="PGMPMM"/>
</dbReference>
<dbReference type="SUPFAM" id="SSF55957">
    <property type="entry name" value="Phosphoglucomutase, C-terminal domain"/>
    <property type="match status" value="1"/>
</dbReference>
<dbReference type="SUPFAM" id="SSF53738">
    <property type="entry name" value="Phosphoglucomutase, first 3 domains"/>
    <property type="match status" value="3"/>
</dbReference>
<dbReference type="PROSITE" id="PS00710">
    <property type="entry name" value="PGM_PMM"/>
    <property type="match status" value="1"/>
</dbReference>
<name>GLMM_LACP7</name>
<sequence>MGKYFGTDGFRGEANKTLTVEHAYKVGRFLGWYYGKDHKAKVAIGKDTRRSSYMFEYSLVAGLTASGADVYLLHVTPTPSVSYVVRSEGFDCGIMISASHNPFQDNGIKVINGGGYKLENEVEKLIEDYIDGEIPEIPFAFGENIGKTVDYSMGRHRYIGHLISLATRSFKGIKVGLDLANGSATTVAKGVFDALGAKTYVIHGEPDGVNINSDCGSTHIEQLQKFVVEQGLDIGFAYDGDADRCLAVDELGQVIDGDAILYLCGCYMKERGELRNNTVVTTIMSNLGLYKSLDAKEIGYAKTAVGDKYVFENMMEHGHSIGGEQSGHIIFNKHATTGDGVLTSLKIMEVMLEKKEKISVLLRELKIYPQLLLNIPVVDKKMAKNDPDVMEAAKAVELELGDEGRILVRESGTESVIRVMVEAGSNEVCQKYADNVVVVLRQKGHIKA</sequence>
<protein>
    <recommendedName>
        <fullName evidence="1">Phosphoglucosamine mutase</fullName>
        <ecNumber evidence="1">5.4.2.10</ecNumber>
    </recommendedName>
</protein>
<gene>
    <name evidence="1" type="primary">glmM</name>
    <name type="ordered locus">Cphy_0375</name>
</gene>
<evidence type="ECO:0000255" key="1">
    <source>
        <dbReference type="HAMAP-Rule" id="MF_01554"/>
    </source>
</evidence>
<feature type="chain" id="PRO_0000343587" description="Phosphoglucosamine mutase">
    <location>
        <begin position="1"/>
        <end position="448"/>
    </location>
</feature>
<feature type="active site" description="Phosphoserine intermediate" evidence="1">
    <location>
        <position position="99"/>
    </location>
</feature>
<feature type="binding site" description="via phosphate group" evidence="1">
    <location>
        <position position="99"/>
    </location>
    <ligand>
        <name>Mg(2+)</name>
        <dbReference type="ChEBI" id="CHEBI:18420"/>
    </ligand>
</feature>
<feature type="binding site" evidence="1">
    <location>
        <position position="239"/>
    </location>
    <ligand>
        <name>Mg(2+)</name>
        <dbReference type="ChEBI" id="CHEBI:18420"/>
    </ligand>
</feature>
<feature type="binding site" evidence="1">
    <location>
        <position position="241"/>
    </location>
    <ligand>
        <name>Mg(2+)</name>
        <dbReference type="ChEBI" id="CHEBI:18420"/>
    </ligand>
</feature>
<feature type="binding site" evidence="1">
    <location>
        <position position="243"/>
    </location>
    <ligand>
        <name>Mg(2+)</name>
        <dbReference type="ChEBI" id="CHEBI:18420"/>
    </ligand>
</feature>
<feature type="modified residue" description="Phosphoserine" evidence="1">
    <location>
        <position position="99"/>
    </location>
</feature>
<proteinExistence type="inferred from homology"/>